<feature type="chain" id="PRO_0000148854" description="Aspartyl/glutamyl-tRNA(Asn/Gln) amidotransferase subunit B">
    <location>
        <begin position="1"/>
        <end position="500"/>
    </location>
</feature>
<proteinExistence type="inferred from homology"/>
<evidence type="ECO:0000255" key="1">
    <source>
        <dbReference type="HAMAP-Rule" id="MF_00121"/>
    </source>
</evidence>
<reference key="1">
    <citation type="journal article" date="2002" name="DNA Res.">
        <title>Complete genome structure of the thermophilic cyanobacterium Thermosynechococcus elongatus BP-1.</title>
        <authorList>
            <person name="Nakamura Y."/>
            <person name="Kaneko T."/>
            <person name="Sato S."/>
            <person name="Ikeuchi M."/>
            <person name="Katoh H."/>
            <person name="Sasamoto S."/>
            <person name="Watanabe A."/>
            <person name="Iriguchi M."/>
            <person name="Kawashima K."/>
            <person name="Kimura T."/>
            <person name="Kishida Y."/>
            <person name="Kiyokawa C."/>
            <person name="Kohara M."/>
            <person name="Matsumoto M."/>
            <person name="Matsuno A."/>
            <person name="Nakazaki N."/>
            <person name="Shimpo S."/>
            <person name="Sugimoto M."/>
            <person name="Takeuchi C."/>
            <person name="Yamada M."/>
            <person name="Tabata S."/>
        </authorList>
    </citation>
    <scope>NUCLEOTIDE SEQUENCE [LARGE SCALE GENOMIC DNA]</scope>
    <source>
        <strain>NIES-2133 / IAM M-273 / BP-1</strain>
    </source>
</reference>
<keyword id="KW-0067">ATP-binding</keyword>
<keyword id="KW-0436">Ligase</keyword>
<keyword id="KW-0547">Nucleotide-binding</keyword>
<keyword id="KW-0648">Protein biosynthesis</keyword>
<keyword id="KW-1185">Reference proteome</keyword>
<name>GATB_THEVB</name>
<sequence>MAPEPTPVDAASLTYEAVIGLEIHCQLSTQTKIFSSSSTQFGAPPNTNIDPVCLGLPGTLPVLNEKVLEYAVKAGLALNCQIAPYSKFDRKQYFYPDLPKNYQISQYDLPIAHHGYLEIELVDDKGTARRKKIGITRLHMEEDAGKLVHAGSDRLSGSAYSLVDLNRAGVPLVEIVSEPDLRTGQEAAEYAQELRRILRYLGVCDGNMQEGSLRCDVNISVRPVGSNTFGTKVEIKNMNSFSAIQRAIDYEIERQVAALKAGEPIVQETRLWDEATQETRTMRVKEGSSDYRYFPEPDLGPIEVTAEQLAAWRAELPELPAQKRRRYESEWGLPPQDARVLTDERAVAEYFEATVVAGAPPKLAANWIMGDITAYLKEQKLAIEALPLKPAELAELIQLIEAGTISGKIAKEILPELLSQGGSPKALVERKGLSQISDVATLEAMIDEVLAAHPNELEQYRAGKTKLQGFFVGQLMKKSGGRADPKLANQLLAQKLNPGS</sequence>
<dbReference type="EC" id="6.3.5.-" evidence="1"/>
<dbReference type="EMBL" id="BA000039">
    <property type="protein sequence ID" value="BAC09946.1"/>
    <property type="molecule type" value="Genomic_DNA"/>
</dbReference>
<dbReference type="RefSeq" id="NP_683184.1">
    <property type="nucleotide sequence ID" value="NC_004113.1"/>
</dbReference>
<dbReference type="RefSeq" id="WP_011058226.1">
    <property type="nucleotide sequence ID" value="NC_004113.1"/>
</dbReference>
<dbReference type="SMR" id="Q8DGC4"/>
<dbReference type="STRING" id="197221.gene:10749014"/>
<dbReference type="EnsemblBacteria" id="BAC09946">
    <property type="protein sequence ID" value="BAC09946"/>
    <property type="gene ID" value="BAC09946"/>
</dbReference>
<dbReference type="KEGG" id="tel:tlr2394"/>
<dbReference type="PATRIC" id="fig|197221.4.peg.2515"/>
<dbReference type="eggNOG" id="COG0064">
    <property type="taxonomic scope" value="Bacteria"/>
</dbReference>
<dbReference type="Proteomes" id="UP000000440">
    <property type="component" value="Chromosome"/>
</dbReference>
<dbReference type="GO" id="GO:0050566">
    <property type="term" value="F:asparaginyl-tRNA synthase (glutamine-hydrolyzing) activity"/>
    <property type="evidence" value="ECO:0007669"/>
    <property type="project" value="RHEA"/>
</dbReference>
<dbReference type="GO" id="GO:0005524">
    <property type="term" value="F:ATP binding"/>
    <property type="evidence" value="ECO:0007669"/>
    <property type="project" value="UniProtKB-KW"/>
</dbReference>
<dbReference type="GO" id="GO:0050567">
    <property type="term" value="F:glutaminyl-tRNA synthase (glutamine-hydrolyzing) activity"/>
    <property type="evidence" value="ECO:0007669"/>
    <property type="project" value="UniProtKB-UniRule"/>
</dbReference>
<dbReference type="GO" id="GO:0070681">
    <property type="term" value="P:glutaminyl-tRNAGln biosynthesis via transamidation"/>
    <property type="evidence" value="ECO:0007669"/>
    <property type="project" value="TreeGrafter"/>
</dbReference>
<dbReference type="GO" id="GO:0006412">
    <property type="term" value="P:translation"/>
    <property type="evidence" value="ECO:0007669"/>
    <property type="project" value="UniProtKB-UniRule"/>
</dbReference>
<dbReference type="FunFam" id="1.10.10.410:FF:000001">
    <property type="entry name" value="Aspartyl/glutamyl-tRNA(Asn/Gln) amidotransferase subunit B"/>
    <property type="match status" value="1"/>
</dbReference>
<dbReference type="FunFam" id="1.10.150.380:FF:000001">
    <property type="entry name" value="Aspartyl/glutamyl-tRNA(Asn/Gln) amidotransferase subunit B"/>
    <property type="match status" value="1"/>
</dbReference>
<dbReference type="Gene3D" id="1.10.10.410">
    <property type="match status" value="1"/>
</dbReference>
<dbReference type="Gene3D" id="1.10.150.380">
    <property type="entry name" value="GatB domain, N-terminal subdomain"/>
    <property type="match status" value="1"/>
</dbReference>
<dbReference type="HAMAP" id="MF_00121">
    <property type="entry name" value="GatB"/>
    <property type="match status" value="1"/>
</dbReference>
<dbReference type="InterPro" id="IPR017959">
    <property type="entry name" value="Asn/Gln-tRNA_amidoTrfase_suB/E"/>
</dbReference>
<dbReference type="InterPro" id="IPR006075">
    <property type="entry name" value="Asn/Gln-tRNA_Trfase_suB/E_cat"/>
</dbReference>
<dbReference type="InterPro" id="IPR018027">
    <property type="entry name" value="Asn/Gln_amidotransferase"/>
</dbReference>
<dbReference type="InterPro" id="IPR003789">
    <property type="entry name" value="Asn/Gln_tRNA_amidoTrase-B-like"/>
</dbReference>
<dbReference type="InterPro" id="IPR004413">
    <property type="entry name" value="GatB"/>
</dbReference>
<dbReference type="InterPro" id="IPR042114">
    <property type="entry name" value="GatB_C_1"/>
</dbReference>
<dbReference type="InterPro" id="IPR023168">
    <property type="entry name" value="GatB_Yqey_C_2"/>
</dbReference>
<dbReference type="InterPro" id="IPR017958">
    <property type="entry name" value="Gln-tRNA_amidoTrfase_suB_CS"/>
</dbReference>
<dbReference type="InterPro" id="IPR014746">
    <property type="entry name" value="Gln_synth/guanido_kin_cat_dom"/>
</dbReference>
<dbReference type="NCBIfam" id="TIGR00133">
    <property type="entry name" value="gatB"/>
    <property type="match status" value="1"/>
</dbReference>
<dbReference type="NCBIfam" id="NF004012">
    <property type="entry name" value="PRK05477.1-2"/>
    <property type="match status" value="1"/>
</dbReference>
<dbReference type="NCBIfam" id="NF004014">
    <property type="entry name" value="PRK05477.1-4"/>
    <property type="match status" value="1"/>
</dbReference>
<dbReference type="PANTHER" id="PTHR11659">
    <property type="entry name" value="GLUTAMYL-TRNA GLN AMIDOTRANSFERASE SUBUNIT B MITOCHONDRIAL AND PROKARYOTIC PET112-RELATED"/>
    <property type="match status" value="1"/>
</dbReference>
<dbReference type="PANTHER" id="PTHR11659:SF0">
    <property type="entry name" value="GLUTAMYL-TRNA(GLN) AMIDOTRANSFERASE SUBUNIT B, MITOCHONDRIAL"/>
    <property type="match status" value="1"/>
</dbReference>
<dbReference type="Pfam" id="PF02934">
    <property type="entry name" value="GatB_N"/>
    <property type="match status" value="1"/>
</dbReference>
<dbReference type="Pfam" id="PF02637">
    <property type="entry name" value="GatB_Yqey"/>
    <property type="match status" value="1"/>
</dbReference>
<dbReference type="SMART" id="SM00845">
    <property type="entry name" value="GatB_Yqey"/>
    <property type="match status" value="1"/>
</dbReference>
<dbReference type="SUPFAM" id="SSF89095">
    <property type="entry name" value="GatB/YqeY motif"/>
    <property type="match status" value="1"/>
</dbReference>
<dbReference type="SUPFAM" id="SSF55931">
    <property type="entry name" value="Glutamine synthetase/guanido kinase"/>
    <property type="match status" value="1"/>
</dbReference>
<dbReference type="PROSITE" id="PS01234">
    <property type="entry name" value="GATB"/>
    <property type="match status" value="1"/>
</dbReference>
<accession>Q8DGC4</accession>
<protein>
    <recommendedName>
        <fullName evidence="1">Aspartyl/glutamyl-tRNA(Asn/Gln) amidotransferase subunit B</fullName>
        <shortName evidence="1">Asp/Glu-ADT subunit B</shortName>
        <ecNumber evidence="1">6.3.5.-</ecNumber>
    </recommendedName>
</protein>
<organism>
    <name type="scientific">Thermosynechococcus vestitus (strain NIES-2133 / IAM M-273 / BP-1)</name>
    <dbReference type="NCBI Taxonomy" id="197221"/>
    <lineage>
        <taxon>Bacteria</taxon>
        <taxon>Bacillati</taxon>
        <taxon>Cyanobacteriota</taxon>
        <taxon>Cyanophyceae</taxon>
        <taxon>Acaryochloridales</taxon>
        <taxon>Thermosynechococcaceae</taxon>
        <taxon>Thermosynechococcus</taxon>
    </lineage>
</organism>
<gene>
    <name evidence="1" type="primary">gatB</name>
    <name type="ordered locus">tlr2394</name>
</gene>
<comment type="function">
    <text evidence="1">Allows the formation of correctly charged Asn-tRNA(Asn) or Gln-tRNA(Gln) through the transamidation of misacylated Asp-tRNA(Asn) or Glu-tRNA(Gln) in organisms which lack either or both of asparaginyl-tRNA or glutaminyl-tRNA synthetases. The reaction takes place in the presence of glutamine and ATP through an activated phospho-Asp-tRNA(Asn) or phospho-Glu-tRNA(Gln).</text>
</comment>
<comment type="catalytic activity">
    <reaction evidence="1">
        <text>L-glutamyl-tRNA(Gln) + L-glutamine + ATP + H2O = L-glutaminyl-tRNA(Gln) + L-glutamate + ADP + phosphate + H(+)</text>
        <dbReference type="Rhea" id="RHEA:17521"/>
        <dbReference type="Rhea" id="RHEA-COMP:9681"/>
        <dbReference type="Rhea" id="RHEA-COMP:9684"/>
        <dbReference type="ChEBI" id="CHEBI:15377"/>
        <dbReference type="ChEBI" id="CHEBI:15378"/>
        <dbReference type="ChEBI" id="CHEBI:29985"/>
        <dbReference type="ChEBI" id="CHEBI:30616"/>
        <dbReference type="ChEBI" id="CHEBI:43474"/>
        <dbReference type="ChEBI" id="CHEBI:58359"/>
        <dbReference type="ChEBI" id="CHEBI:78520"/>
        <dbReference type="ChEBI" id="CHEBI:78521"/>
        <dbReference type="ChEBI" id="CHEBI:456216"/>
    </reaction>
</comment>
<comment type="catalytic activity">
    <reaction evidence="1">
        <text>L-aspartyl-tRNA(Asn) + L-glutamine + ATP + H2O = L-asparaginyl-tRNA(Asn) + L-glutamate + ADP + phosphate + 2 H(+)</text>
        <dbReference type="Rhea" id="RHEA:14513"/>
        <dbReference type="Rhea" id="RHEA-COMP:9674"/>
        <dbReference type="Rhea" id="RHEA-COMP:9677"/>
        <dbReference type="ChEBI" id="CHEBI:15377"/>
        <dbReference type="ChEBI" id="CHEBI:15378"/>
        <dbReference type="ChEBI" id="CHEBI:29985"/>
        <dbReference type="ChEBI" id="CHEBI:30616"/>
        <dbReference type="ChEBI" id="CHEBI:43474"/>
        <dbReference type="ChEBI" id="CHEBI:58359"/>
        <dbReference type="ChEBI" id="CHEBI:78515"/>
        <dbReference type="ChEBI" id="CHEBI:78516"/>
        <dbReference type="ChEBI" id="CHEBI:456216"/>
    </reaction>
</comment>
<comment type="subunit">
    <text evidence="1">Heterotrimer of A, B and C subunits.</text>
</comment>
<comment type="similarity">
    <text evidence="1">Belongs to the GatB/GatE family. GatB subfamily.</text>
</comment>